<sequence>MSSGIILLLVAIVLLVIIAYVVGVVIRKRNDTLIANLETRKQELVDLPVQEEIEQVKLLHLIGQSQSTFREWNQKWTDLSTNSFKDIDFHLVEAENLNDSFNFVRAKHEIDNVDSQLTIIEEDIVSIREALEVLKEQEEKNSARVTHALDLYETLQKSISEKEDNYGTTMPEIEKQLKNIEAEFSHFVTLNSTGDPIEASEVLNKAEEHTIALGQITEQIPAIVAKLEDDFPDQLDDLETGYRRLLEENYHFPEKDIEQRFQEVREAIRSNSDGLVSLDLDRARDENEHIQEKIDKLYDIFEREIAAYKVAHKDSKIIPQFLAHAKSNNEQLGHEIKRLSAKYILNENESLSLRSFTNDLEEIETKVLPSVENFGQEASPYTHLQILFERTLKTLTTVEENQMEVFEAVKTIESVETRARQNMDKYVNKLHMIKRFMEKRNLPGIPQDFLSTFFTTSSQIEALINELSRGRIDIEAVSRLNDVTTNAIANLEQATYLVVQDATLTEQLLQYSNRYRSFEQNVQKSFEQALYLFEVEHNYKASFDEISYALETVEPGVTDRFVTSYEKTQERIRF</sequence>
<dbReference type="EMBL" id="AL766846">
    <property type="protein sequence ID" value="CAD46248.1"/>
    <property type="molecule type" value="Genomic_DNA"/>
</dbReference>
<dbReference type="RefSeq" id="WP_000094341.1">
    <property type="nucleotide sequence ID" value="NC_004368.1"/>
</dbReference>
<dbReference type="SMR" id="Q8E6G4"/>
<dbReference type="GeneID" id="66885537"/>
<dbReference type="KEGG" id="san:gbs0604"/>
<dbReference type="eggNOG" id="COG4477">
    <property type="taxonomic scope" value="Bacteria"/>
</dbReference>
<dbReference type="HOGENOM" id="CLU_034079_2_0_9"/>
<dbReference type="Proteomes" id="UP000000823">
    <property type="component" value="Chromosome"/>
</dbReference>
<dbReference type="GO" id="GO:0005886">
    <property type="term" value="C:plasma membrane"/>
    <property type="evidence" value="ECO:0007669"/>
    <property type="project" value="UniProtKB-SubCell"/>
</dbReference>
<dbReference type="GO" id="GO:0005940">
    <property type="term" value="C:septin ring"/>
    <property type="evidence" value="ECO:0007669"/>
    <property type="project" value="InterPro"/>
</dbReference>
<dbReference type="GO" id="GO:0000917">
    <property type="term" value="P:division septum assembly"/>
    <property type="evidence" value="ECO:0007669"/>
    <property type="project" value="UniProtKB-KW"/>
</dbReference>
<dbReference type="GO" id="GO:0000921">
    <property type="term" value="P:septin ring assembly"/>
    <property type="evidence" value="ECO:0007669"/>
    <property type="project" value="InterPro"/>
</dbReference>
<dbReference type="HAMAP" id="MF_00728">
    <property type="entry name" value="EzrA"/>
    <property type="match status" value="1"/>
</dbReference>
<dbReference type="InterPro" id="IPR010379">
    <property type="entry name" value="EzrA"/>
</dbReference>
<dbReference type="NCBIfam" id="NF003407">
    <property type="entry name" value="PRK04778.1-1"/>
    <property type="match status" value="1"/>
</dbReference>
<dbReference type="NCBIfam" id="NF003410">
    <property type="entry name" value="PRK04778.1-4"/>
    <property type="match status" value="1"/>
</dbReference>
<dbReference type="Pfam" id="PF06160">
    <property type="entry name" value="EzrA"/>
    <property type="match status" value="1"/>
</dbReference>
<protein>
    <recommendedName>
        <fullName evidence="1">Septation ring formation regulator EzrA</fullName>
    </recommendedName>
</protein>
<proteinExistence type="inferred from homology"/>
<comment type="function">
    <text evidence="1">Negative regulator of FtsZ ring formation; modulates the frequency and position of FtsZ ring formation. Inhibits FtsZ ring formation at polar sites. Interacts either with FtsZ or with one of its binding partners to promote depolymerization.</text>
</comment>
<comment type="subcellular location">
    <subcellularLocation>
        <location>Cell membrane</location>
        <topology>Single-pass membrane protein</topology>
    </subcellularLocation>
    <text evidence="1">Colocalized with FtsZ to the nascent septal site.</text>
</comment>
<comment type="similarity">
    <text evidence="1">Belongs to the EzrA family.</text>
</comment>
<feature type="chain" id="PRO_0000172886" description="Septation ring formation regulator EzrA">
    <location>
        <begin position="1"/>
        <end position="574"/>
    </location>
</feature>
<feature type="topological domain" description="Extracellular" evidence="1">
    <location>
        <begin position="1"/>
        <end position="7"/>
    </location>
</feature>
<feature type="transmembrane region" description="Helical" evidence="1">
    <location>
        <begin position="8"/>
        <end position="26"/>
    </location>
</feature>
<feature type="topological domain" description="Cytoplasmic" evidence="1">
    <location>
        <begin position="27"/>
        <end position="574"/>
    </location>
</feature>
<feature type="coiled-coil region" evidence="1">
    <location>
        <begin position="104"/>
        <end position="141"/>
    </location>
</feature>
<feature type="coiled-coil region" evidence="1">
    <location>
        <begin position="275"/>
        <end position="343"/>
    </location>
</feature>
<feature type="coiled-coil region" evidence="1">
    <location>
        <begin position="473"/>
        <end position="525"/>
    </location>
</feature>
<organism>
    <name type="scientific">Streptococcus agalactiae serotype III (strain NEM316)</name>
    <dbReference type="NCBI Taxonomy" id="211110"/>
    <lineage>
        <taxon>Bacteria</taxon>
        <taxon>Bacillati</taxon>
        <taxon>Bacillota</taxon>
        <taxon>Bacilli</taxon>
        <taxon>Lactobacillales</taxon>
        <taxon>Streptococcaceae</taxon>
        <taxon>Streptococcus</taxon>
    </lineage>
</organism>
<evidence type="ECO:0000255" key="1">
    <source>
        <dbReference type="HAMAP-Rule" id="MF_00728"/>
    </source>
</evidence>
<name>EZRA_STRA3</name>
<gene>
    <name evidence="1" type="primary">ezrA</name>
    <name type="ordered locus">gbs0604</name>
</gene>
<accession>Q8E6G4</accession>
<keyword id="KW-0131">Cell cycle</keyword>
<keyword id="KW-0132">Cell division</keyword>
<keyword id="KW-1003">Cell membrane</keyword>
<keyword id="KW-0175">Coiled coil</keyword>
<keyword id="KW-0472">Membrane</keyword>
<keyword id="KW-0717">Septation</keyword>
<keyword id="KW-0812">Transmembrane</keyword>
<keyword id="KW-1133">Transmembrane helix</keyword>
<reference key="1">
    <citation type="journal article" date="2002" name="Mol. Microbiol.">
        <title>Genome sequence of Streptococcus agalactiae, a pathogen causing invasive neonatal disease.</title>
        <authorList>
            <person name="Glaser P."/>
            <person name="Rusniok C."/>
            <person name="Buchrieser C."/>
            <person name="Chevalier F."/>
            <person name="Frangeul L."/>
            <person name="Msadek T."/>
            <person name="Zouine M."/>
            <person name="Couve E."/>
            <person name="Lalioui L."/>
            <person name="Poyart C."/>
            <person name="Trieu-Cuot P."/>
            <person name="Kunst F."/>
        </authorList>
    </citation>
    <scope>NUCLEOTIDE SEQUENCE [LARGE SCALE GENOMIC DNA]</scope>
    <source>
        <strain>NEM316</strain>
    </source>
</reference>